<keyword id="KW-0067">ATP-binding</keyword>
<keyword id="KW-0547">Nucleotide-binding</keyword>
<keyword id="KW-0548">Nucleotidyltransferase</keyword>
<keyword id="KW-1185">Reference proteome</keyword>
<keyword id="KW-0808">Transferase</keyword>
<proteinExistence type="inferred from homology"/>
<sequence length="302" mass="35073">MDQQRLTHLKQLEAESIHIIREVAAEFDNPVMMYSIGKDSSVMLHLTRKAFYPGKIPFPLLHVDTDWKFRDMITFRDTTAKKYGFDLIVHKNPEGLAAGINPFDHGSSKHTDIMKTQGLKQALNKYGFDAAFGGARRDEEKSRAKERVYSFRDKNHTWDPKNQRPELWRTYNGQINKGESIRVFPLSNWTELDIWQYIYLENIEIVPLYLADVRPVVQRDGMLIMVDDDRMKLREGEQIEHKSVRFRTLGCYPLTGAIESQANTLTEIIEEMLVATSSERQGRAIDHDQSGSMELKKRQGYF</sequence>
<protein>
    <recommendedName>
        <fullName evidence="1">Sulfate adenylyltransferase subunit 2</fullName>
        <ecNumber evidence="1">2.7.7.4</ecNumber>
    </recommendedName>
    <alternativeName>
        <fullName evidence="1">ATP-sulfurylase small subunit</fullName>
    </alternativeName>
    <alternativeName>
        <fullName evidence="1">Sulfate adenylate transferase</fullName>
        <shortName evidence="1">SAT</shortName>
    </alternativeName>
</protein>
<evidence type="ECO:0000255" key="1">
    <source>
        <dbReference type="HAMAP-Rule" id="MF_00064"/>
    </source>
</evidence>
<evidence type="ECO:0000256" key="2">
    <source>
        <dbReference type="SAM" id="MobiDB-lite"/>
    </source>
</evidence>
<evidence type="ECO:0000305" key="3"/>
<dbReference type="EC" id="2.7.7.4" evidence="1"/>
<dbReference type="EMBL" id="AE003852">
    <property type="protein sequence ID" value="AAF95701.1"/>
    <property type="status" value="ALT_INIT"/>
    <property type="molecule type" value="Genomic_DNA"/>
</dbReference>
<dbReference type="PIR" id="H82062">
    <property type="entry name" value="H82062"/>
</dbReference>
<dbReference type="RefSeq" id="NP_232188.2">
    <property type="nucleotide sequence ID" value="NC_002505.1"/>
</dbReference>
<dbReference type="SMR" id="Q9KP19"/>
<dbReference type="STRING" id="243277.VC_2560"/>
<dbReference type="DNASU" id="2615577"/>
<dbReference type="EnsemblBacteria" id="AAF95701">
    <property type="protein sequence ID" value="AAF95701"/>
    <property type="gene ID" value="VC_2560"/>
</dbReference>
<dbReference type="KEGG" id="vch:VC_2560"/>
<dbReference type="PATRIC" id="fig|243277.26.peg.2438"/>
<dbReference type="eggNOG" id="COG0175">
    <property type="taxonomic scope" value="Bacteria"/>
</dbReference>
<dbReference type="HOGENOM" id="CLU_043026_0_0_6"/>
<dbReference type="UniPathway" id="UPA00140">
    <property type="reaction ID" value="UER00204"/>
</dbReference>
<dbReference type="Proteomes" id="UP000000584">
    <property type="component" value="Chromosome 1"/>
</dbReference>
<dbReference type="GO" id="GO:0005524">
    <property type="term" value="F:ATP binding"/>
    <property type="evidence" value="ECO:0007669"/>
    <property type="project" value="UniProtKB-KW"/>
</dbReference>
<dbReference type="GO" id="GO:0004781">
    <property type="term" value="F:sulfate adenylyltransferase (ATP) activity"/>
    <property type="evidence" value="ECO:0007669"/>
    <property type="project" value="UniProtKB-UniRule"/>
</dbReference>
<dbReference type="GO" id="GO:0070814">
    <property type="term" value="P:hydrogen sulfide biosynthetic process"/>
    <property type="evidence" value="ECO:0007669"/>
    <property type="project" value="UniProtKB-UniRule"/>
</dbReference>
<dbReference type="GO" id="GO:0000103">
    <property type="term" value="P:sulfate assimilation"/>
    <property type="evidence" value="ECO:0007669"/>
    <property type="project" value="UniProtKB-UniRule"/>
</dbReference>
<dbReference type="CDD" id="cd23946">
    <property type="entry name" value="Sulfate_adenylyltransferase_2"/>
    <property type="match status" value="1"/>
</dbReference>
<dbReference type="FunFam" id="3.40.50.620:FF:000002">
    <property type="entry name" value="Sulfate adenylyltransferase subunit 2"/>
    <property type="match status" value="1"/>
</dbReference>
<dbReference type="Gene3D" id="3.40.50.620">
    <property type="entry name" value="HUPs"/>
    <property type="match status" value="1"/>
</dbReference>
<dbReference type="HAMAP" id="MF_00064">
    <property type="entry name" value="Sulf_adenylyltr_sub2"/>
    <property type="match status" value="1"/>
</dbReference>
<dbReference type="InterPro" id="IPR002500">
    <property type="entry name" value="PAPS_reduct_dom"/>
</dbReference>
<dbReference type="InterPro" id="IPR014729">
    <property type="entry name" value="Rossmann-like_a/b/a_fold"/>
</dbReference>
<dbReference type="InterPro" id="IPR011784">
    <property type="entry name" value="SO4_adenylTrfase_ssu"/>
</dbReference>
<dbReference type="InterPro" id="IPR050128">
    <property type="entry name" value="Sulfate_adenylyltrnsfr_sub2"/>
</dbReference>
<dbReference type="NCBIfam" id="TIGR02039">
    <property type="entry name" value="CysD"/>
    <property type="match status" value="1"/>
</dbReference>
<dbReference type="NCBIfam" id="NF003587">
    <property type="entry name" value="PRK05253.1"/>
    <property type="match status" value="1"/>
</dbReference>
<dbReference type="NCBIfam" id="NF009214">
    <property type="entry name" value="PRK12563.1"/>
    <property type="match status" value="1"/>
</dbReference>
<dbReference type="PANTHER" id="PTHR43196">
    <property type="entry name" value="SULFATE ADENYLYLTRANSFERASE SUBUNIT 2"/>
    <property type="match status" value="1"/>
</dbReference>
<dbReference type="PANTHER" id="PTHR43196:SF1">
    <property type="entry name" value="SULFATE ADENYLYLTRANSFERASE SUBUNIT 2"/>
    <property type="match status" value="1"/>
</dbReference>
<dbReference type="Pfam" id="PF01507">
    <property type="entry name" value="PAPS_reduct"/>
    <property type="match status" value="1"/>
</dbReference>
<dbReference type="PIRSF" id="PIRSF002936">
    <property type="entry name" value="CysDAde_trans"/>
    <property type="match status" value="1"/>
</dbReference>
<dbReference type="SUPFAM" id="SSF52402">
    <property type="entry name" value="Adenine nucleotide alpha hydrolases-like"/>
    <property type="match status" value="1"/>
</dbReference>
<accession>Q9KP19</accession>
<reference key="1">
    <citation type="journal article" date="2000" name="Nature">
        <title>DNA sequence of both chromosomes of the cholera pathogen Vibrio cholerae.</title>
        <authorList>
            <person name="Heidelberg J.F."/>
            <person name="Eisen J.A."/>
            <person name="Nelson W.C."/>
            <person name="Clayton R.A."/>
            <person name="Gwinn M.L."/>
            <person name="Dodson R.J."/>
            <person name="Haft D.H."/>
            <person name="Hickey E.K."/>
            <person name="Peterson J.D."/>
            <person name="Umayam L.A."/>
            <person name="Gill S.R."/>
            <person name="Nelson K.E."/>
            <person name="Read T.D."/>
            <person name="Tettelin H."/>
            <person name="Richardson D.L."/>
            <person name="Ermolaeva M.D."/>
            <person name="Vamathevan J.J."/>
            <person name="Bass S."/>
            <person name="Qin H."/>
            <person name="Dragoi I."/>
            <person name="Sellers P."/>
            <person name="McDonald L.A."/>
            <person name="Utterback T.R."/>
            <person name="Fleischmann R.D."/>
            <person name="Nierman W.C."/>
            <person name="White O."/>
            <person name="Salzberg S.L."/>
            <person name="Smith H.O."/>
            <person name="Colwell R.R."/>
            <person name="Mekalanos J.J."/>
            <person name="Venter J.C."/>
            <person name="Fraser C.M."/>
        </authorList>
    </citation>
    <scope>NUCLEOTIDE SEQUENCE [LARGE SCALE GENOMIC DNA]</scope>
    <source>
        <strain>ATCC 39315 / El Tor Inaba N16961</strain>
    </source>
</reference>
<feature type="chain" id="PRO_0000100677" description="Sulfate adenylyltransferase subunit 2">
    <location>
        <begin position="1"/>
        <end position="302"/>
    </location>
</feature>
<feature type="region of interest" description="Disordered" evidence="2">
    <location>
        <begin position="280"/>
        <end position="302"/>
    </location>
</feature>
<organism>
    <name type="scientific">Vibrio cholerae serotype O1 (strain ATCC 39315 / El Tor Inaba N16961)</name>
    <dbReference type="NCBI Taxonomy" id="243277"/>
    <lineage>
        <taxon>Bacteria</taxon>
        <taxon>Pseudomonadati</taxon>
        <taxon>Pseudomonadota</taxon>
        <taxon>Gammaproteobacteria</taxon>
        <taxon>Vibrionales</taxon>
        <taxon>Vibrionaceae</taxon>
        <taxon>Vibrio</taxon>
    </lineage>
</organism>
<comment type="function">
    <text evidence="1">With CysN forms the ATP sulfurylase (ATPS) that catalyzes the adenylation of sulfate producing adenosine 5'-phosphosulfate (APS) and diphosphate, the first enzymatic step in sulfur assimilation pathway. APS synthesis involves the formation of a high-energy phosphoric-sulfuric acid anhydride bond driven by GTP hydrolysis by CysN coupled to ATP hydrolysis by CysD.</text>
</comment>
<comment type="catalytic activity">
    <reaction evidence="1">
        <text>sulfate + ATP + H(+) = adenosine 5'-phosphosulfate + diphosphate</text>
        <dbReference type="Rhea" id="RHEA:18133"/>
        <dbReference type="ChEBI" id="CHEBI:15378"/>
        <dbReference type="ChEBI" id="CHEBI:16189"/>
        <dbReference type="ChEBI" id="CHEBI:30616"/>
        <dbReference type="ChEBI" id="CHEBI:33019"/>
        <dbReference type="ChEBI" id="CHEBI:58243"/>
        <dbReference type="EC" id="2.7.7.4"/>
    </reaction>
</comment>
<comment type="pathway">
    <text evidence="1">Sulfur metabolism; hydrogen sulfide biosynthesis; sulfite from sulfate: step 1/3.</text>
</comment>
<comment type="subunit">
    <text evidence="1">Heterodimer composed of CysD, the smaller subunit, and CysN.</text>
</comment>
<comment type="similarity">
    <text evidence="1">Belongs to the PAPS reductase family. CysD subfamily.</text>
</comment>
<comment type="sequence caution" evidence="3">
    <conflict type="erroneous initiation">
        <sequence resource="EMBL-CDS" id="AAF95701"/>
    </conflict>
</comment>
<name>CYSD_VIBCH</name>
<gene>
    <name evidence="1" type="primary">cysD</name>
    <name type="ordered locus">VC_2560</name>
</gene>